<protein>
    <recommendedName>
        <fullName evidence="1">UPF0149 protein VS_2635</fullName>
    </recommendedName>
</protein>
<name>Y2635_VIBA3</name>
<gene>
    <name type="ordered locus">VS_2635</name>
</gene>
<accession>B7VK95</accession>
<dbReference type="EMBL" id="FM954972">
    <property type="protein sequence ID" value="CAV19858.1"/>
    <property type="molecule type" value="Genomic_DNA"/>
</dbReference>
<dbReference type="SMR" id="B7VK95"/>
<dbReference type="STRING" id="575788.VS_2635"/>
<dbReference type="KEGG" id="vsp:VS_2635"/>
<dbReference type="eggNOG" id="COG3079">
    <property type="taxonomic scope" value="Bacteria"/>
</dbReference>
<dbReference type="HOGENOM" id="CLU_085336_1_0_6"/>
<dbReference type="Proteomes" id="UP000009100">
    <property type="component" value="Chromosome 1"/>
</dbReference>
<dbReference type="GO" id="GO:0005829">
    <property type="term" value="C:cytosol"/>
    <property type="evidence" value="ECO:0007669"/>
    <property type="project" value="TreeGrafter"/>
</dbReference>
<dbReference type="Gene3D" id="1.20.120.740">
    <property type="entry name" value="YgfB uncharacterised protein family UPF0149, PF03695"/>
    <property type="match status" value="1"/>
</dbReference>
<dbReference type="HAMAP" id="MF_00346">
    <property type="entry name" value="UPF0149"/>
    <property type="match status" value="1"/>
</dbReference>
<dbReference type="InterPro" id="IPR011978">
    <property type="entry name" value="YgfB-like"/>
</dbReference>
<dbReference type="InterPro" id="IPR036255">
    <property type="entry name" value="YgfB-like_sf"/>
</dbReference>
<dbReference type="NCBIfam" id="NF002477">
    <property type="entry name" value="PRK01736.1"/>
    <property type="match status" value="1"/>
</dbReference>
<dbReference type="NCBIfam" id="TIGR02292">
    <property type="entry name" value="ygfB_yecA"/>
    <property type="match status" value="1"/>
</dbReference>
<dbReference type="PANTHER" id="PTHR37528">
    <property type="entry name" value="UPF0149 PROTEIN YGFB"/>
    <property type="match status" value="1"/>
</dbReference>
<dbReference type="PANTHER" id="PTHR37528:SF1">
    <property type="entry name" value="UPF0149 PROTEIN YGFB"/>
    <property type="match status" value="1"/>
</dbReference>
<dbReference type="Pfam" id="PF03695">
    <property type="entry name" value="UPF0149"/>
    <property type="match status" value="1"/>
</dbReference>
<dbReference type="SUPFAM" id="SSF101327">
    <property type="entry name" value="YgfB-like"/>
    <property type="match status" value="1"/>
</dbReference>
<organism>
    <name type="scientific">Vibrio atlanticus (strain LGP32)</name>
    <name type="common">Vibrio splendidus (strain Mel32)</name>
    <dbReference type="NCBI Taxonomy" id="575788"/>
    <lineage>
        <taxon>Bacteria</taxon>
        <taxon>Pseudomonadati</taxon>
        <taxon>Pseudomonadota</taxon>
        <taxon>Gammaproteobacteria</taxon>
        <taxon>Vibrionales</taxon>
        <taxon>Vibrionaceae</taxon>
        <taxon>Vibrio</taxon>
    </lineage>
</organism>
<comment type="similarity">
    <text evidence="1">Belongs to the UPF0149 family.</text>
</comment>
<reference key="1">
    <citation type="submission" date="2009-02" db="EMBL/GenBank/DDBJ databases">
        <title>Vibrio splendidus str. LGP32 complete genome.</title>
        <authorList>
            <person name="Mazel D."/>
            <person name="Le Roux F."/>
        </authorList>
    </citation>
    <scope>NUCLEOTIDE SEQUENCE [LARGE SCALE GENOMIC DNA]</scope>
    <source>
        <strain>LGP32</strain>
    </source>
</reference>
<feature type="chain" id="PRO_1000133400" description="UPF0149 protein VS_2635">
    <location>
        <begin position="1"/>
        <end position="191"/>
    </location>
</feature>
<evidence type="ECO:0000255" key="1">
    <source>
        <dbReference type="HAMAP-Rule" id="MF_00346"/>
    </source>
</evidence>
<proteinExistence type="inferred from homology"/>
<sequence length="191" mass="20385">MSETTLPDYLTVATELQSASLAVNPAEMHGLLTGMLSGGLNLADKSWQPLIFDYTNEGMGWPDRALTLAEATLKVTTSEITGSGMELSMLLPDEDASASLFDLADGVSDWINHFISGLGLVGAQLNKASDGTKEALADLEEMAKLGIDEDDDMEEQAQLLEHVIEHVKACALTIHAEFGARPSEDAAPTIH</sequence>